<dbReference type="EMBL" id="X92546">
    <property type="status" value="NOT_ANNOTATED_CDS"/>
    <property type="molecule type" value="Genomic_DNA"/>
</dbReference>
<dbReference type="EMBL" id="AL513382">
    <property type="protein sequence ID" value="CAD05986.1"/>
    <property type="molecule type" value="Genomic_DNA"/>
</dbReference>
<dbReference type="EMBL" id="AE014613">
    <property type="protein sequence ID" value="AAO70342.1"/>
    <property type="molecule type" value="Genomic_DNA"/>
</dbReference>
<dbReference type="RefSeq" id="NP_457273.1">
    <property type="nucleotide sequence ID" value="NC_003198.1"/>
</dbReference>
<dbReference type="SMR" id="Q8Z497"/>
<dbReference type="STRING" id="220341.gene:17586896"/>
<dbReference type="KEGG" id="stt:t2781"/>
<dbReference type="KEGG" id="sty:STY3002"/>
<dbReference type="PATRIC" id="fig|220341.7.peg.3056"/>
<dbReference type="eggNOG" id="ENOG5033IR1">
    <property type="taxonomic scope" value="Bacteria"/>
</dbReference>
<dbReference type="HOGENOM" id="CLU_126979_0_0_6"/>
<dbReference type="OMA" id="TELANMY"/>
<dbReference type="Proteomes" id="UP000000541">
    <property type="component" value="Chromosome"/>
</dbReference>
<dbReference type="Proteomes" id="UP000002670">
    <property type="component" value="Chromosome"/>
</dbReference>
<dbReference type="GO" id="GO:0005737">
    <property type="term" value="C:cytoplasm"/>
    <property type="evidence" value="ECO:0007669"/>
    <property type="project" value="UniProtKB-SubCell"/>
</dbReference>
<dbReference type="GO" id="GO:0030254">
    <property type="term" value="P:protein secretion by the type III secretion system"/>
    <property type="evidence" value="ECO:0007669"/>
    <property type="project" value="InterPro"/>
</dbReference>
<dbReference type="CDD" id="cd17021">
    <property type="entry name" value="T3SC_IA_SicP-like"/>
    <property type="match status" value="1"/>
</dbReference>
<dbReference type="Gene3D" id="3.30.1460.10">
    <property type="match status" value="1"/>
</dbReference>
<dbReference type="InterPro" id="IPR044530">
    <property type="entry name" value="SicP"/>
</dbReference>
<dbReference type="NCBIfam" id="NF011857">
    <property type="entry name" value="PRK15329.1"/>
    <property type="match status" value="1"/>
</dbReference>
<dbReference type="SUPFAM" id="SSF69635">
    <property type="entry name" value="Type III secretory system chaperone-like"/>
    <property type="match status" value="1"/>
</dbReference>
<protein>
    <recommendedName>
        <fullName>Chaperone protein SicP</fullName>
    </recommendedName>
</protein>
<proteinExistence type="inferred from homology"/>
<keyword id="KW-0143">Chaperone</keyword>
<keyword id="KW-0963">Cytoplasm</keyword>
<keyword id="KW-0843">Virulence</keyword>
<reference key="1">
    <citation type="journal article" date="1997" name="Res. Microbiol.">
        <title>Molecular characterization of the Salmonella typhi StpA protein that is related to both Yersinia YopE cytotoxin and YopH tyrosine phosphatase.</title>
        <authorList>
            <person name="Arricau N."/>
            <person name="Hermant D."/>
            <person name="Waxin H."/>
            <person name="Popoff M.Y."/>
        </authorList>
    </citation>
    <scope>NUCLEOTIDE SEQUENCE [GENOMIC DNA]</scope>
    <source>
        <strain>ATCC 700931 / Ty2</strain>
    </source>
</reference>
<reference key="2">
    <citation type="journal article" date="2001" name="Nature">
        <title>Complete genome sequence of a multiple drug resistant Salmonella enterica serovar Typhi CT18.</title>
        <authorList>
            <person name="Parkhill J."/>
            <person name="Dougan G."/>
            <person name="James K.D."/>
            <person name="Thomson N.R."/>
            <person name="Pickard D."/>
            <person name="Wain J."/>
            <person name="Churcher C.M."/>
            <person name="Mungall K.L."/>
            <person name="Bentley S.D."/>
            <person name="Holden M.T.G."/>
            <person name="Sebaihia M."/>
            <person name="Baker S."/>
            <person name="Basham D."/>
            <person name="Brooks K."/>
            <person name="Chillingworth T."/>
            <person name="Connerton P."/>
            <person name="Cronin A."/>
            <person name="Davis P."/>
            <person name="Davies R.M."/>
            <person name="Dowd L."/>
            <person name="White N."/>
            <person name="Farrar J."/>
            <person name="Feltwell T."/>
            <person name="Hamlin N."/>
            <person name="Haque A."/>
            <person name="Hien T.T."/>
            <person name="Holroyd S."/>
            <person name="Jagels K."/>
            <person name="Krogh A."/>
            <person name="Larsen T.S."/>
            <person name="Leather S."/>
            <person name="Moule S."/>
            <person name="O'Gaora P."/>
            <person name="Parry C."/>
            <person name="Quail M.A."/>
            <person name="Rutherford K.M."/>
            <person name="Simmonds M."/>
            <person name="Skelton J."/>
            <person name="Stevens K."/>
            <person name="Whitehead S."/>
            <person name="Barrell B.G."/>
        </authorList>
    </citation>
    <scope>NUCLEOTIDE SEQUENCE [LARGE SCALE GENOMIC DNA]</scope>
    <source>
        <strain>CT18</strain>
    </source>
</reference>
<reference key="3">
    <citation type="journal article" date="2003" name="J. Bacteriol.">
        <title>Comparative genomics of Salmonella enterica serovar Typhi strains Ty2 and CT18.</title>
        <authorList>
            <person name="Deng W."/>
            <person name="Liou S.-R."/>
            <person name="Plunkett G. III"/>
            <person name="Mayhew G.F."/>
            <person name="Rose D.J."/>
            <person name="Burland V."/>
            <person name="Kodoyianni V."/>
            <person name="Schwartz D.C."/>
            <person name="Blattner F.R."/>
        </authorList>
    </citation>
    <scope>NUCLEOTIDE SEQUENCE [LARGE SCALE GENOMIC DNA]</scope>
    <source>
        <strain>ATCC 700931 / Ty2</strain>
    </source>
</reference>
<evidence type="ECO:0000250" key="1"/>
<evidence type="ECO:0000305" key="2"/>
<comment type="function">
    <text evidence="1">Molecular chaperone required for SptP stabilization and secretion.</text>
</comment>
<comment type="subcellular location">
    <subcellularLocation>
        <location evidence="2">Cytoplasm</location>
    </subcellularLocation>
</comment>
<comment type="similarity">
    <text evidence="2">Belongs to the SicP family.</text>
</comment>
<accession>Q8Z497</accession>
<accession>Q7C7N6</accession>
<name>SICP_SALTI</name>
<feature type="chain" id="PRO_0000097753" description="Chaperone protein SicP">
    <location>
        <begin position="1"/>
        <end position="116"/>
    </location>
</feature>
<gene>
    <name type="primary">sicP</name>
    <name type="synonym">ctpA</name>
    <name type="ordered locus">STY3002</name>
    <name type="ordered locus">t2781</name>
</gene>
<organism>
    <name type="scientific">Salmonella typhi</name>
    <dbReference type="NCBI Taxonomy" id="90370"/>
    <lineage>
        <taxon>Bacteria</taxon>
        <taxon>Pseudomonadati</taxon>
        <taxon>Pseudomonadota</taxon>
        <taxon>Gammaproteobacteria</taxon>
        <taxon>Enterobacterales</taxon>
        <taxon>Enterobacteriaceae</taxon>
        <taxon>Salmonella</taxon>
    </lineage>
</organism>
<sequence>MGLPLTFDDNNQCLLLLDSDIFTSIEAKDDIWLLNGMIIPLSPVCGDSIWRQIMVINGELAANNEGTLAYIDAAETLLFIHAITDLTNIYHIISQLESFVNKQEALKNILQEYAKV</sequence>